<evidence type="ECO:0000255" key="1">
    <source>
        <dbReference type="HAMAP-Rule" id="MF_00122"/>
    </source>
</evidence>
<feature type="chain" id="PRO_1000117636" description="Aspartyl/glutamyl-tRNA(Asn/Gln) amidotransferase subunit C">
    <location>
        <begin position="1"/>
        <end position="95"/>
    </location>
</feature>
<protein>
    <recommendedName>
        <fullName evidence="1">Aspartyl/glutamyl-tRNA(Asn/Gln) amidotransferase subunit C</fullName>
        <shortName evidence="1">Asp/Glu-ADT subunit C</shortName>
        <ecNumber evidence="1">6.3.5.-</ecNumber>
    </recommendedName>
</protein>
<name>GATC_PSEA8</name>
<dbReference type="EC" id="6.3.5.-" evidence="1"/>
<dbReference type="EMBL" id="FM209186">
    <property type="protein sequence ID" value="CAW29616.1"/>
    <property type="molecule type" value="Genomic_DNA"/>
</dbReference>
<dbReference type="RefSeq" id="WP_003094397.1">
    <property type="nucleotide sequence ID" value="NC_011770.1"/>
</dbReference>
<dbReference type="SMR" id="B7V022"/>
<dbReference type="GeneID" id="77222983"/>
<dbReference type="KEGG" id="pag:PLES_48621"/>
<dbReference type="HOGENOM" id="CLU_105899_2_2_6"/>
<dbReference type="GO" id="GO:0050566">
    <property type="term" value="F:asparaginyl-tRNA synthase (glutamine-hydrolyzing) activity"/>
    <property type="evidence" value="ECO:0007669"/>
    <property type="project" value="RHEA"/>
</dbReference>
<dbReference type="GO" id="GO:0005524">
    <property type="term" value="F:ATP binding"/>
    <property type="evidence" value="ECO:0007669"/>
    <property type="project" value="UniProtKB-KW"/>
</dbReference>
<dbReference type="GO" id="GO:0050567">
    <property type="term" value="F:glutaminyl-tRNA synthase (glutamine-hydrolyzing) activity"/>
    <property type="evidence" value="ECO:0007669"/>
    <property type="project" value="UniProtKB-UniRule"/>
</dbReference>
<dbReference type="GO" id="GO:0070681">
    <property type="term" value="P:glutaminyl-tRNAGln biosynthesis via transamidation"/>
    <property type="evidence" value="ECO:0007669"/>
    <property type="project" value="TreeGrafter"/>
</dbReference>
<dbReference type="GO" id="GO:0006450">
    <property type="term" value="P:regulation of translational fidelity"/>
    <property type="evidence" value="ECO:0007669"/>
    <property type="project" value="InterPro"/>
</dbReference>
<dbReference type="GO" id="GO:0006412">
    <property type="term" value="P:translation"/>
    <property type="evidence" value="ECO:0007669"/>
    <property type="project" value="UniProtKB-UniRule"/>
</dbReference>
<dbReference type="Gene3D" id="1.10.20.60">
    <property type="entry name" value="Glu-tRNAGln amidotransferase C subunit, N-terminal domain"/>
    <property type="match status" value="1"/>
</dbReference>
<dbReference type="HAMAP" id="MF_00122">
    <property type="entry name" value="GatC"/>
    <property type="match status" value="1"/>
</dbReference>
<dbReference type="InterPro" id="IPR036113">
    <property type="entry name" value="Asp/Glu-ADT_sf_sub_c"/>
</dbReference>
<dbReference type="InterPro" id="IPR003837">
    <property type="entry name" value="GatC"/>
</dbReference>
<dbReference type="NCBIfam" id="TIGR00135">
    <property type="entry name" value="gatC"/>
    <property type="match status" value="1"/>
</dbReference>
<dbReference type="PANTHER" id="PTHR15004">
    <property type="entry name" value="GLUTAMYL-TRNA(GLN) AMIDOTRANSFERASE SUBUNIT C, MITOCHONDRIAL"/>
    <property type="match status" value="1"/>
</dbReference>
<dbReference type="PANTHER" id="PTHR15004:SF0">
    <property type="entry name" value="GLUTAMYL-TRNA(GLN) AMIDOTRANSFERASE SUBUNIT C, MITOCHONDRIAL"/>
    <property type="match status" value="1"/>
</dbReference>
<dbReference type="Pfam" id="PF02686">
    <property type="entry name" value="GatC"/>
    <property type="match status" value="1"/>
</dbReference>
<dbReference type="SUPFAM" id="SSF141000">
    <property type="entry name" value="Glu-tRNAGln amidotransferase C subunit"/>
    <property type="match status" value="1"/>
</dbReference>
<sequence length="95" mass="10443">MALERSDVEKIAHLARLGLSEADLPRTTETLNNILGLIDQMQAVDTSGVEPLAHPLEATQRLRPDAVTETDHRDAYQTIAPAVEEGLYLVPKVIE</sequence>
<proteinExistence type="inferred from homology"/>
<reference key="1">
    <citation type="journal article" date="2009" name="Genome Res.">
        <title>Newly introduced genomic prophage islands are critical determinants of in vivo competitiveness in the Liverpool epidemic strain of Pseudomonas aeruginosa.</title>
        <authorList>
            <person name="Winstanley C."/>
            <person name="Langille M.G.I."/>
            <person name="Fothergill J.L."/>
            <person name="Kukavica-Ibrulj I."/>
            <person name="Paradis-Bleau C."/>
            <person name="Sanschagrin F."/>
            <person name="Thomson N.R."/>
            <person name="Winsor G.L."/>
            <person name="Quail M.A."/>
            <person name="Lennard N."/>
            <person name="Bignell A."/>
            <person name="Clarke L."/>
            <person name="Seeger K."/>
            <person name="Saunders D."/>
            <person name="Harris D."/>
            <person name="Parkhill J."/>
            <person name="Hancock R.E.W."/>
            <person name="Brinkman F.S.L."/>
            <person name="Levesque R.C."/>
        </authorList>
    </citation>
    <scope>NUCLEOTIDE SEQUENCE [LARGE SCALE GENOMIC DNA]</scope>
    <source>
        <strain>LESB58</strain>
    </source>
</reference>
<accession>B7V022</accession>
<organism>
    <name type="scientific">Pseudomonas aeruginosa (strain LESB58)</name>
    <dbReference type="NCBI Taxonomy" id="557722"/>
    <lineage>
        <taxon>Bacteria</taxon>
        <taxon>Pseudomonadati</taxon>
        <taxon>Pseudomonadota</taxon>
        <taxon>Gammaproteobacteria</taxon>
        <taxon>Pseudomonadales</taxon>
        <taxon>Pseudomonadaceae</taxon>
        <taxon>Pseudomonas</taxon>
    </lineage>
</organism>
<gene>
    <name evidence="1" type="primary">gatC</name>
    <name type="ordered locus">PLES_48621</name>
</gene>
<comment type="function">
    <text evidence="1">Allows the formation of correctly charged Asn-tRNA(Asn) or Gln-tRNA(Gln) through the transamidation of misacylated Asp-tRNA(Asn) or Glu-tRNA(Gln) in organisms which lack either or both of asparaginyl-tRNA or glutaminyl-tRNA synthetases. The reaction takes place in the presence of glutamine and ATP through an activated phospho-Asp-tRNA(Asn) or phospho-Glu-tRNA(Gln).</text>
</comment>
<comment type="catalytic activity">
    <reaction evidence="1">
        <text>L-glutamyl-tRNA(Gln) + L-glutamine + ATP + H2O = L-glutaminyl-tRNA(Gln) + L-glutamate + ADP + phosphate + H(+)</text>
        <dbReference type="Rhea" id="RHEA:17521"/>
        <dbReference type="Rhea" id="RHEA-COMP:9681"/>
        <dbReference type="Rhea" id="RHEA-COMP:9684"/>
        <dbReference type="ChEBI" id="CHEBI:15377"/>
        <dbReference type="ChEBI" id="CHEBI:15378"/>
        <dbReference type="ChEBI" id="CHEBI:29985"/>
        <dbReference type="ChEBI" id="CHEBI:30616"/>
        <dbReference type="ChEBI" id="CHEBI:43474"/>
        <dbReference type="ChEBI" id="CHEBI:58359"/>
        <dbReference type="ChEBI" id="CHEBI:78520"/>
        <dbReference type="ChEBI" id="CHEBI:78521"/>
        <dbReference type="ChEBI" id="CHEBI:456216"/>
    </reaction>
</comment>
<comment type="catalytic activity">
    <reaction evidence="1">
        <text>L-aspartyl-tRNA(Asn) + L-glutamine + ATP + H2O = L-asparaginyl-tRNA(Asn) + L-glutamate + ADP + phosphate + 2 H(+)</text>
        <dbReference type="Rhea" id="RHEA:14513"/>
        <dbReference type="Rhea" id="RHEA-COMP:9674"/>
        <dbReference type="Rhea" id="RHEA-COMP:9677"/>
        <dbReference type="ChEBI" id="CHEBI:15377"/>
        <dbReference type="ChEBI" id="CHEBI:15378"/>
        <dbReference type="ChEBI" id="CHEBI:29985"/>
        <dbReference type="ChEBI" id="CHEBI:30616"/>
        <dbReference type="ChEBI" id="CHEBI:43474"/>
        <dbReference type="ChEBI" id="CHEBI:58359"/>
        <dbReference type="ChEBI" id="CHEBI:78515"/>
        <dbReference type="ChEBI" id="CHEBI:78516"/>
        <dbReference type="ChEBI" id="CHEBI:456216"/>
    </reaction>
</comment>
<comment type="subunit">
    <text evidence="1">Heterotrimer of A, B and C subunits.</text>
</comment>
<comment type="similarity">
    <text evidence="1">Belongs to the GatC family.</text>
</comment>
<keyword id="KW-0067">ATP-binding</keyword>
<keyword id="KW-0436">Ligase</keyword>
<keyword id="KW-0547">Nucleotide-binding</keyword>
<keyword id="KW-0648">Protein biosynthesis</keyword>